<proteinExistence type="inferred from homology"/>
<dbReference type="EMBL" id="AE005674">
    <property type="protein sequence ID" value="AAN42259.2"/>
    <property type="status" value="ALT_INIT"/>
    <property type="molecule type" value="Genomic_DNA"/>
</dbReference>
<dbReference type="EMBL" id="AE014073">
    <property type="protein sequence ID" value="AAP16130.1"/>
    <property type="status" value="ALT_INIT"/>
    <property type="molecule type" value="Genomic_DNA"/>
</dbReference>
<dbReference type="RefSeq" id="NP_706552.2">
    <property type="nucleotide sequence ID" value="NC_004337.2"/>
</dbReference>
<dbReference type="RefSeq" id="WP_001018040.1">
    <property type="nucleotide sequence ID" value="NZ_WPGW01000002.1"/>
</dbReference>
<dbReference type="SMR" id="P0A9K6"/>
<dbReference type="STRING" id="198214.SF0622"/>
<dbReference type="PaxDb" id="198214-SF0622"/>
<dbReference type="GeneID" id="1023553"/>
<dbReference type="KEGG" id="sfl:SF0622"/>
<dbReference type="KEGG" id="sfx:S0644"/>
<dbReference type="PATRIC" id="fig|198214.7.peg.727"/>
<dbReference type="HOGENOM" id="CLU_051654_0_0_6"/>
<dbReference type="Proteomes" id="UP000001006">
    <property type="component" value="Chromosome"/>
</dbReference>
<dbReference type="Proteomes" id="UP000002673">
    <property type="component" value="Chromosome"/>
</dbReference>
<dbReference type="GO" id="GO:0005829">
    <property type="term" value="C:cytosol"/>
    <property type="evidence" value="ECO:0007669"/>
    <property type="project" value="TreeGrafter"/>
</dbReference>
<dbReference type="GO" id="GO:0005524">
    <property type="term" value="F:ATP binding"/>
    <property type="evidence" value="ECO:0007669"/>
    <property type="project" value="UniProtKB-KW"/>
</dbReference>
<dbReference type="FunFam" id="3.40.50.300:FF:000013">
    <property type="entry name" value="PhoH family ATPase"/>
    <property type="match status" value="1"/>
</dbReference>
<dbReference type="Gene3D" id="3.40.50.300">
    <property type="entry name" value="P-loop containing nucleotide triphosphate hydrolases"/>
    <property type="match status" value="1"/>
</dbReference>
<dbReference type="InterPro" id="IPR027417">
    <property type="entry name" value="P-loop_NTPase"/>
</dbReference>
<dbReference type="InterPro" id="IPR003714">
    <property type="entry name" value="PhoH"/>
</dbReference>
<dbReference type="InterPro" id="IPR051451">
    <property type="entry name" value="PhoH2-like"/>
</dbReference>
<dbReference type="PANTHER" id="PTHR30473:SF1">
    <property type="entry name" value="PHOH-LIKE PROTEIN"/>
    <property type="match status" value="1"/>
</dbReference>
<dbReference type="PANTHER" id="PTHR30473">
    <property type="entry name" value="PROTEIN PHOH"/>
    <property type="match status" value="1"/>
</dbReference>
<dbReference type="Pfam" id="PF02562">
    <property type="entry name" value="PhoH"/>
    <property type="match status" value="1"/>
</dbReference>
<dbReference type="SUPFAM" id="SSF52540">
    <property type="entry name" value="P-loop containing nucleoside triphosphate hydrolases"/>
    <property type="match status" value="1"/>
</dbReference>
<feature type="chain" id="PRO_0000201155" description="PhoH-like protein">
    <location>
        <begin position="1"/>
        <end position="346"/>
    </location>
</feature>
<feature type="binding site" evidence="1">
    <location>
        <begin position="142"/>
        <end position="149"/>
    </location>
    <ligand>
        <name>ATP</name>
        <dbReference type="ChEBI" id="CHEBI:30616"/>
    </ligand>
</feature>
<accession>P0A9K6</accession>
<accession>P77349</accession>
<protein>
    <recommendedName>
        <fullName>PhoH-like protein</fullName>
    </recommendedName>
</protein>
<sequence>MNIDTREITLEPADNARLLSLCGPFDDNIKQLERRLGIEINRRDNHFKLTGRPICVTAAADILRSLYVDTAPMRGQIQDIEPEQIHLAIKEARVLEQSAESVPEYGKAVNIKTKRGVIKPRTPNQAQYIANILDHDITFGVGPAGTGKTYLAVAAAVDALERQEIRRILLTRPAVEAGEKLGFLPGDLSQKVDPYLRPLYDALFEMLGFEKVEKLIERNVIEVAPLAYMRGRTLNDAFIILDESQNTTIEQMKMFLTRIGFNSKAVITGDVTQIDLPRNTKSGLRHAIEVLADVEEISFNFFHSEDVVRHPVVARIVNAYEAWEEAEQKRKAALAAERKREEQEQK</sequence>
<evidence type="ECO:0000255" key="1"/>
<evidence type="ECO:0000305" key="2"/>
<keyword id="KW-0067">ATP-binding</keyword>
<keyword id="KW-0963">Cytoplasm</keyword>
<keyword id="KW-0547">Nucleotide-binding</keyword>
<keyword id="KW-1185">Reference proteome</keyword>
<reference key="1">
    <citation type="journal article" date="2002" name="Nucleic Acids Res.">
        <title>Genome sequence of Shigella flexneri 2a: insights into pathogenicity through comparison with genomes of Escherichia coli K12 and O157.</title>
        <authorList>
            <person name="Jin Q."/>
            <person name="Yuan Z."/>
            <person name="Xu J."/>
            <person name="Wang Y."/>
            <person name="Shen Y."/>
            <person name="Lu W."/>
            <person name="Wang J."/>
            <person name="Liu H."/>
            <person name="Yang J."/>
            <person name="Yang F."/>
            <person name="Zhang X."/>
            <person name="Zhang J."/>
            <person name="Yang G."/>
            <person name="Wu H."/>
            <person name="Qu D."/>
            <person name="Dong J."/>
            <person name="Sun L."/>
            <person name="Xue Y."/>
            <person name="Zhao A."/>
            <person name="Gao Y."/>
            <person name="Zhu J."/>
            <person name="Kan B."/>
            <person name="Ding K."/>
            <person name="Chen S."/>
            <person name="Cheng H."/>
            <person name="Yao Z."/>
            <person name="He B."/>
            <person name="Chen R."/>
            <person name="Ma D."/>
            <person name="Qiang B."/>
            <person name="Wen Y."/>
            <person name="Hou Y."/>
            <person name="Yu J."/>
        </authorList>
    </citation>
    <scope>NUCLEOTIDE SEQUENCE [LARGE SCALE GENOMIC DNA]</scope>
    <source>
        <strain>301 / Serotype 2a</strain>
    </source>
</reference>
<reference key="2">
    <citation type="journal article" date="2003" name="Infect. Immun.">
        <title>Complete genome sequence and comparative genomics of Shigella flexneri serotype 2a strain 2457T.</title>
        <authorList>
            <person name="Wei J."/>
            <person name="Goldberg M.B."/>
            <person name="Burland V."/>
            <person name="Venkatesan M.M."/>
            <person name="Deng W."/>
            <person name="Fournier G."/>
            <person name="Mayhew G.F."/>
            <person name="Plunkett G. III"/>
            <person name="Rose D.J."/>
            <person name="Darling A."/>
            <person name="Mau B."/>
            <person name="Perna N.T."/>
            <person name="Payne S.M."/>
            <person name="Runyen-Janecky L.J."/>
            <person name="Zhou S."/>
            <person name="Schwartz D.C."/>
            <person name="Blattner F.R."/>
        </authorList>
    </citation>
    <scope>NUCLEOTIDE SEQUENCE [LARGE SCALE GENOMIC DNA]</scope>
    <source>
        <strain>ATCC 700930 / 2457T / Serotype 2a</strain>
    </source>
</reference>
<gene>
    <name type="primary">ybeZ</name>
    <name type="ordered locus">SF0622</name>
    <name type="ordered locus">S0644</name>
</gene>
<organism>
    <name type="scientific">Shigella flexneri</name>
    <dbReference type="NCBI Taxonomy" id="623"/>
    <lineage>
        <taxon>Bacteria</taxon>
        <taxon>Pseudomonadati</taxon>
        <taxon>Pseudomonadota</taxon>
        <taxon>Gammaproteobacteria</taxon>
        <taxon>Enterobacterales</taxon>
        <taxon>Enterobacteriaceae</taxon>
        <taxon>Shigella</taxon>
    </lineage>
</organism>
<name>PHOL_SHIFL</name>
<comment type="subcellular location">
    <subcellularLocation>
        <location evidence="2">Cytoplasm</location>
    </subcellularLocation>
</comment>
<comment type="similarity">
    <text evidence="2">Belongs to the PhoH family.</text>
</comment>
<comment type="sequence caution" evidence="2">
    <conflict type="erroneous initiation">
        <sequence resource="EMBL-CDS" id="AAN42259"/>
    </conflict>
    <text>Extended N-terminus.</text>
</comment>
<comment type="sequence caution" evidence="2">
    <conflict type="erroneous initiation">
        <sequence resource="EMBL-CDS" id="AAP16130"/>
    </conflict>
    <text>Extended N-terminus.</text>
</comment>